<keyword id="KW-1185">Reference proteome</keyword>
<keyword id="KW-0687">Ribonucleoprotein</keyword>
<keyword id="KW-0689">Ribosomal protein</keyword>
<accession>B2IB44</accession>
<dbReference type="EMBL" id="CP001016">
    <property type="protein sequence ID" value="ACB93744.1"/>
    <property type="molecule type" value="Genomic_DNA"/>
</dbReference>
<dbReference type="SMR" id="B2IB44"/>
<dbReference type="STRING" id="395963.Bind_0085"/>
<dbReference type="KEGG" id="bid:Bind_0085"/>
<dbReference type="eggNOG" id="COG0257">
    <property type="taxonomic scope" value="Bacteria"/>
</dbReference>
<dbReference type="HOGENOM" id="CLU_135723_3_2_5"/>
<dbReference type="OrthoDB" id="9801558at2"/>
<dbReference type="Proteomes" id="UP000001695">
    <property type="component" value="Chromosome"/>
</dbReference>
<dbReference type="GO" id="GO:1990904">
    <property type="term" value="C:ribonucleoprotein complex"/>
    <property type="evidence" value="ECO:0007669"/>
    <property type="project" value="UniProtKB-KW"/>
</dbReference>
<dbReference type="GO" id="GO:0005840">
    <property type="term" value="C:ribosome"/>
    <property type="evidence" value="ECO:0007669"/>
    <property type="project" value="UniProtKB-KW"/>
</dbReference>
<dbReference type="GO" id="GO:0003735">
    <property type="term" value="F:structural constituent of ribosome"/>
    <property type="evidence" value="ECO:0007669"/>
    <property type="project" value="InterPro"/>
</dbReference>
<dbReference type="GO" id="GO:0006412">
    <property type="term" value="P:translation"/>
    <property type="evidence" value="ECO:0007669"/>
    <property type="project" value="UniProtKB-UniRule"/>
</dbReference>
<dbReference type="HAMAP" id="MF_00251">
    <property type="entry name" value="Ribosomal_bL36"/>
    <property type="match status" value="1"/>
</dbReference>
<dbReference type="InterPro" id="IPR000473">
    <property type="entry name" value="Ribosomal_bL36"/>
</dbReference>
<dbReference type="InterPro" id="IPR035977">
    <property type="entry name" value="Ribosomal_bL36_sp"/>
</dbReference>
<dbReference type="InterPro" id="IPR047621">
    <property type="entry name" value="Ribosomal_L36_bact"/>
</dbReference>
<dbReference type="NCBIfam" id="NF002021">
    <property type="entry name" value="PRK00831.1"/>
    <property type="match status" value="1"/>
</dbReference>
<dbReference type="NCBIfam" id="TIGR01022">
    <property type="entry name" value="rpmJ_bact"/>
    <property type="match status" value="1"/>
</dbReference>
<dbReference type="PANTHER" id="PTHR47781">
    <property type="entry name" value="50S RIBOSOMAL PROTEIN L36 2"/>
    <property type="match status" value="1"/>
</dbReference>
<dbReference type="PANTHER" id="PTHR47781:SF1">
    <property type="entry name" value="LARGE RIBOSOMAL SUBUNIT PROTEIN BL36B"/>
    <property type="match status" value="1"/>
</dbReference>
<dbReference type="Pfam" id="PF00444">
    <property type="entry name" value="Ribosomal_L36"/>
    <property type="match status" value="1"/>
</dbReference>
<dbReference type="SUPFAM" id="SSF57840">
    <property type="entry name" value="Ribosomal protein L36"/>
    <property type="match status" value="1"/>
</dbReference>
<protein>
    <recommendedName>
        <fullName evidence="1">Large ribosomal subunit protein bL36</fullName>
    </recommendedName>
    <alternativeName>
        <fullName evidence="2">50S ribosomal protein L36</fullName>
    </alternativeName>
</protein>
<comment type="similarity">
    <text evidence="1">Belongs to the bacterial ribosomal protein bL36 family.</text>
</comment>
<gene>
    <name evidence="1" type="primary">rpmJ</name>
    <name type="ordered locus">Bind_0085</name>
</gene>
<organism>
    <name type="scientific">Beijerinckia indica subsp. indica (strain ATCC 9039 / DSM 1715 / NCIMB 8712)</name>
    <dbReference type="NCBI Taxonomy" id="395963"/>
    <lineage>
        <taxon>Bacteria</taxon>
        <taxon>Pseudomonadati</taxon>
        <taxon>Pseudomonadota</taxon>
        <taxon>Alphaproteobacteria</taxon>
        <taxon>Hyphomicrobiales</taxon>
        <taxon>Beijerinckiaceae</taxon>
        <taxon>Beijerinckia</taxon>
    </lineage>
</organism>
<evidence type="ECO:0000255" key="1">
    <source>
        <dbReference type="HAMAP-Rule" id="MF_00251"/>
    </source>
</evidence>
<evidence type="ECO:0000305" key="2"/>
<proteinExistence type="inferred from homology"/>
<reference key="1">
    <citation type="journal article" date="2010" name="J. Bacteriol.">
        <title>Complete genome sequence of Beijerinckia indica subsp. indica.</title>
        <authorList>
            <person name="Tamas I."/>
            <person name="Dedysh S.N."/>
            <person name="Liesack W."/>
            <person name="Stott M.B."/>
            <person name="Alam M."/>
            <person name="Murrell J.C."/>
            <person name="Dunfield P.F."/>
        </authorList>
    </citation>
    <scope>NUCLEOTIDE SEQUENCE [LARGE SCALE GENOMIC DNA]</scope>
    <source>
        <strain>ATCC 9039 / DSM 1715 / NCIMB 8712</strain>
    </source>
</reference>
<sequence>MKVRNSLKSLRTRHRDNRLVRRKGRVYIINKTQKRYKARQG</sequence>
<name>RL36_BEII9</name>
<feature type="chain" id="PRO_1000101000" description="Large ribosomal subunit protein bL36">
    <location>
        <begin position="1"/>
        <end position="41"/>
    </location>
</feature>